<protein>
    <recommendedName>
        <fullName evidence="1">Methionyl-tRNA formyltransferase</fullName>
        <ecNumber evidence="1">2.1.2.9</ecNumber>
    </recommendedName>
</protein>
<sequence>MSKPLRIIFAGTPDFAARHLSALIDSHHEVIGVYTQPDRPAGRGKKLTASPVKELALEHNIPVFQPENFKSDEAKQELVDQNADLMVVVAYGLLLPQAVLDTPKLGCINVHGSILPRWRGAAPIQRSIWAGDAETGVTIMQMDIGLDTGDMLKIATLPIEATDTSASMYDKLAELGPVALVDCLSDIADGSAIAQKQDDELANYAKKLSKEEAKIDWTMDAIAIERCVRAFNPWPMSHFSVEDKAIKVWQSRVESYTGDATPGTIIQADKTGIYVATGSDAIVFEQLQVPGKKAMGVQDILNSRKEWFEVGNTLN</sequence>
<dbReference type="EC" id="2.1.2.9" evidence="1"/>
<dbReference type="EMBL" id="CP000020">
    <property type="protein sequence ID" value="AAW87039.1"/>
    <property type="molecule type" value="Genomic_DNA"/>
</dbReference>
<dbReference type="RefSeq" id="WP_011262886.1">
    <property type="nucleotide sequence ID" value="NC_006840.2"/>
</dbReference>
<dbReference type="RefSeq" id="YP_205927.1">
    <property type="nucleotide sequence ID" value="NC_006840.2"/>
</dbReference>
<dbReference type="SMR" id="Q5E1Q7"/>
<dbReference type="STRING" id="312309.VF_2544"/>
<dbReference type="EnsemblBacteria" id="AAW87039">
    <property type="protein sequence ID" value="AAW87039"/>
    <property type="gene ID" value="VF_2544"/>
</dbReference>
<dbReference type="GeneID" id="54165294"/>
<dbReference type="KEGG" id="vfi:VF_2544"/>
<dbReference type="PATRIC" id="fig|312309.11.peg.2570"/>
<dbReference type="eggNOG" id="COG0223">
    <property type="taxonomic scope" value="Bacteria"/>
</dbReference>
<dbReference type="HOGENOM" id="CLU_033347_1_2_6"/>
<dbReference type="OrthoDB" id="9802815at2"/>
<dbReference type="Proteomes" id="UP000000537">
    <property type="component" value="Chromosome I"/>
</dbReference>
<dbReference type="GO" id="GO:0005829">
    <property type="term" value="C:cytosol"/>
    <property type="evidence" value="ECO:0007669"/>
    <property type="project" value="TreeGrafter"/>
</dbReference>
<dbReference type="GO" id="GO:0004479">
    <property type="term" value="F:methionyl-tRNA formyltransferase activity"/>
    <property type="evidence" value="ECO:0007669"/>
    <property type="project" value="UniProtKB-UniRule"/>
</dbReference>
<dbReference type="CDD" id="cd08646">
    <property type="entry name" value="FMT_core_Met-tRNA-FMT_N"/>
    <property type="match status" value="1"/>
</dbReference>
<dbReference type="CDD" id="cd08704">
    <property type="entry name" value="Met_tRNA_FMT_C"/>
    <property type="match status" value="1"/>
</dbReference>
<dbReference type="FunFam" id="3.40.50.170:FF:000003">
    <property type="entry name" value="Methionyl-tRNA formyltransferase"/>
    <property type="match status" value="1"/>
</dbReference>
<dbReference type="Gene3D" id="3.10.25.10">
    <property type="entry name" value="Formyl transferase, C-terminal domain"/>
    <property type="match status" value="1"/>
</dbReference>
<dbReference type="Gene3D" id="3.40.50.170">
    <property type="entry name" value="Formyl transferase, N-terminal domain"/>
    <property type="match status" value="1"/>
</dbReference>
<dbReference type="HAMAP" id="MF_00182">
    <property type="entry name" value="Formyl_trans"/>
    <property type="match status" value="1"/>
</dbReference>
<dbReference type="InterPro" id="IPR005794">
    <property type="entry name" value="Fmt"/>
</dbReference>
<dbReference type="InterPro" id="IPR005793">
    <property type="entry name" value="Formyl_trans_C"/>
</dbReference>
<dbReference type="InterPro" id="IPR037022">
    <property type="entry name" value="Formyl_trans_C_sf"/>
</dbReference>
<dbReference type="InterPro" id="IPR002376">
    <property type="entry name" value="Formyl_transf_N"/>
</dbReference>
<dbReference type="InterPro" id="IPR036477">
    <property type="entry name" value="Formyl_transf_N_sf"/>
</dbReference>
<dbReference type="InterPro" id="IPR011034">
    <property type="entry name" value="Formyl_transferase-like_C_sf"/>
</dbReference>
<dbReference type="InterPro" id="IPR001555">
    <property type="entry name" value="GART_AS"/>
</dbReference>
<dbReference type="InterPro" id="IPR044135">
    <property type="entry name" value="Met-tRNA-FMT_C"/>
</dbReference>
<dbReference type="InterPro" id="IPR041711">
    <property type="entry name" value="Met-tRNA-FMT_N"/>
</dbReference>
<dbReference type="NCBIfam" id="TIGR00460">
    <property type="entry name" value="fmt"/>
    <property type="match status" value="1"/>
</dbReference>
<dbReference type="PANTHER" id="PTHR11138">
    <property type="entry name" value="METHIONYL-TRNA FORMYLTRANSFERASE"/>
    <property type="match status" value="1"/>
</dbReference>
<dbReference type="PANTHER" id="PTHR11138:SF5">
    <property type="entry name" value="METHIONYL-TRNA FORMYLTRANSFERASE, MITOCHONDRIAL"/>
    <property type="match status" value="1"/>
</dbReference>
<dbReference type="Pfam" id="PF02911">
    <property type="entry name" value="Formyl_trans_C"/>
    <property type="match status" value="1"/>
</dbReference>
<dbReference type="Pfam" id="PF00551">
    <property type="entry name" value="Formyl_trans_N"/>
    <property type="match status" value="1"/>
</dbReference>
<dbReference type="SUPFAM" id="SSF50486">
    <property type="entry name" value="FMT C-terminal domain-like"/>
    <property type="match status" value="1"/>
</dbReference>
<dbReference type="SUPFAM" id="SSF53328">
    <property type="entry name" value="Formyltransferase"/>
    <property type="match status" value="1"/>
</dbReference>
<dbReference type="PROSITE" id="PS00373">
    <property type="entry name" value="GART"/>
    <property type="match status" value="1"/>
</dbReference>
<reference key="1">
    <citation type="journal article" date="2005" name="Proc. Natl. Acad. Sci. U.S.A.">
        <title>Complete genome sequence of Vibrio fischeri: a symbiotic bacterium with pathogenic congeners.</title>
        <authorList>
            <person name="Ruby E.G."/>
            <person name="Urbanowski M."/>
            <person name="Campbell J."/>
            <person name="Dunn A."/>
            <person name="Faini M."/>
            <person name="Gunsalus R."/>
            <person name="Lostroh P."/>
            <person name="Lupp C."/>
            <person name="McCann J."/>
            <person name="Millikan D."/>
            <person name="Schaefer A."/>
            <person name="Stabb E."/>
            <person name="Stevens A."/>
            <person name="Visick K."/>
            <person name="Whistler C."/>
            <person name="Greenberg E.P."/>
        </authorList>
    </citation>
    <scope>NUCLEOTIDE SEQUENCE [LARGE SCALE GENOMIC DNA]</scope>
    <source>
        <strain>ATCC 700601 / ES114</strain>
    </source>
</reference>
<comment type="function">
    <text evidence="1">Attaches a formyl group to the free amino group of methionyl-tRNA(fMet). The formyl group appears to play a dual role in the initiator identity of N-formylmethionyl-tRNA by promoting its recognition by IF2 and preventing the misappropriation of this tRNA by the elongation apparatus.</text>
</comment>
<comment type="catalytic activity">
    <reaction evidence="1">
        <text>L-methionyl-tRNA(fMet) + (6R)-10-formyltetrahydrofolate = N-formyl-L-methionyl-tRNA(fMet) + (6S)-5,6,7,8-tetrahydrofolate + H(+)</text>
        <dbReference type="Rhea" id="RHEA:24380"/>
        <dbReference type="Rhea" id="RHEA-COMP:9952"/>
        <dbReference type="Rhea" id="RHEA-COMP:9953"/>
        <dbReference type="ChEBI" id="CHEBI:15378"/>
        <dbReference type="ChEBI" id="CHEBI:57453"/>
        <dbReference type="ChEBI" id="CHEBI:78530"/>
        <dbReference type="ChEBI" id="CHEBI:78844"/>
        <dbReference type="ChEBI" id="CHEBI:195366"/>
        <dbReference type="EC" id="2.1.2.9"/>
    </reaction>
</comment>
<comment type="similarity">
    <text evidence="1">Belongs to the Fmt family.</text>
</comment>
<gene>
    <name evidence="1" type="primary">fmt</name>
    <name type="ordered locus">VF_2544</name>
</gene>
<accession>Q5E1Q7</accession>
<proteinExistence type="inferred from homology"/>
<feature type="chain" id="PRO_0000083081" description="Methionyl-tRNA formyltransferase">
    <location>
        <begin position="1"/>
        <end position="315"/>
    </location>
</feature>
<feature type="binding site" evidence="1">
    <location>
        <begin position="113"/>
        <end position="116"/>
    </location>
    <ligand>
        <name>(6S)-5,6,7,8-tetrahydrofolate</name>
        <dbReference type="ChEBI" id="CHEBI:57453"/>
    </ligand>
</feature>
<keyword id="KW-0648">Protein biosynthesis</keyword>
<keyword id="KW-1185">Reference proteome</keyword>
<keyword id="KW-0808">Transferase</keyword>
<organism>
    <name type="scientific">Aliivibrio fischeri (strain ATCC 700601 / ES114)</name>
    <name type="common">Vibrio fischeri</name>
    <dbReference type="NCBI Taxonomy" id="312309"/>
    <lineage>
        <taxon>Bacteria</taxon>
        <taxon>Pseudomonadati</taxon>
        <taxon>Pseudomonadota</taxon>
        <taxon>Gammaproteobacteria</taxon>
        <taxon>Vibrionales</taxon>
        <taxon>Vibrionaceae</taxon>
        <taxon>Aliivibrio</taxon>
    </lineage>
</organism>
<name>FMT_ALIF1</name>
<evidence type="ECO:0000255" key="1">
    <source>
        <dbReference type="HAMAP-Rule" id="MF_00182"/>
    </source>
</evidence>